<dbReference type="EC" id="3.1.-.-" evidence="1"/>
<dbReference type="EMBL" id="AM181176">
    <property type="protein sequence ID" value="CAY52573.1"/>
    <property type="molecule type" value="Genomic_DNA"/>
</dbReference>
<dbReference type="RefSeq" id="WP_015886051.1">
    <property type="nucleotide sequence ID" value="NC_012660.1"/>
</dbReference>
<dbReference type="SMR" id="C3K2K8"/>
<dbReference type="STRING" id="294.SRM1_05027"/>
<dbReference type="PATRIC" id="fig|216595.4.peg.5527"/>
<dbReference type="eggNOG" id="COG0319">
    <property type="taxonomic scope" value="Bacteria"/>
</dbReference>
<dbReference type="HOGENOM" id="CLU_106710_0_1_6"/>
<dbReference type="OrthoDB" id="9807740at2"/>
<dbReference type="GO" id="GO:0005737">
    <property type="term" value="C:cytoplasm"/>
    <property type="evidence" value="ECO:0007669"/>
    <property type="project" value="UniProtKB-SubCell"/>
</dbReference>
<dbReference type="GO" id="GO:0004222">
    <property type="term" value="F:metalloendopeptidase activity"/>
    <property type="evidence" value="ECO:0007669"/>
    <property type="project" value="InterPro"/>
</dbReference>
<dbReference type="GO" id="GO:0004521">
    <property type="term" value="F:RNA endonuclease activity"/>
    <property type="evidence" value="ECO:0007669"/>
    <property type="project" value="UniProtKB-UniRule"/>
</dbReference>
<dbReference type="GO" id="GO:0008270">
    <property type="term" value="F:zinc ion binding"/>
    <property type="evidence" value="ECO:0007669"/>
    <property type="project" value="UniProtKB-UniRule"/>
</dbReference>
<dbReference type="GO" id="GO:0006364">
    <property type="term" value="P:rRNA processing"/>
    <property type="evidence" value="ECO:0007669"/>
    <property type="project" value="UniProtKB-UniRule"/>
</dbReference>
<dbReference type="Gene3D" id="3.40.390.30">
    <property type="entry name" value="Metalloproteases ('zincins'), catalytic domain"/>
    <property type="match status" value="1"/>
</dbReference>
<dbReference type="HAMAP" id="MF_00009">
    <property type="entry name" value="Endoribonucl_YbeY"/>
    <property type="match status" value="1"/>
</dbReference>
<dbReference type="InterPro" id="IPR023091">
    <property type="entry name" value="MetalPrtase_cat_dom_sf_prd"/>
</dbReference>
<dbReference type="InterPro" id="IPR002036">
    <property type="entry name" value="YbeY"/>
</dbReference>
<dbReference type="InterPro" id="IPR020549">
    <property type="entry name" value="YbeY_CS"/>
</dbReference>
<dbReference type="NCBIfam" id="TIGR00043">
    <property type="entry name" value="rRNA maturation RNase YbeY"/>
    <property type="match status" value="1"/>
</dbReference>
<dbReference type="PANTHER" id="PTHR46986">
    <property type="entry name" value="ENDORIBONUCLEASE YBEY, CHLOROPLASTIC"/>
    <property type="match status" value="1"/>
</dbReference>
<dbReference type="PANTHER" id="PTHR46986:SF1">
    <property type="entry name" value="ENDORIBONUCLEASE YBEY, CHLOROPLASTIC"/>
    <property type="match status" value="1"/>
</dbReference>
<dbReference type="Pfam" id="PF02130">
    <property type="entry name" value="YbeY"/>
    <property type="match status" value="1"/>
</dbReference>
<dbReference type="SUPFAM" id="SSF55486">
    <property type="entry name" value="Metalloproteases ('zincins'), catalytic domain"/>
    <property type="match status" value="1"/>
</dbReference>
<dbReference type="PROSITE" id="PS01306">
    <property type="entry name" value="UPF0054"/>
    <property type="match status" value="1"/>
</dbReference>
<comment type="function">
    <text evidence="1">Single strand-specific metallo-endoribonuclease involved in late-stage 70S ribosome quality control and in maturation of the 3' terminus of the 16S rRNA.</text>
</comment>
<comment type="cofactor">
    <cofactor evidence="1">
        <name>Zn(2+)</name>
        <dbReference type="ChEBI" id="CHEBI:29105"/>
    </cofactor>
    <text evidence="1">Binds 1 zinc ion.</text>
</comment>
<comment type="subcellular location">
    <subcellularLocation>
        <location evidence="1">Cytoplasm</location>
    </subcellularLocation>
</comment>
<comment type="similarity">
    <text evidence="1">Belongs to the endoribonuclease YbeY family.</text>
</comment>
<name>YBEY_PSEFS</name>
<proteinExistence type="inferred from homology"/>
<sequence>MLELDLQLATEAPAPSEAQFREWCALALRQRTADSELTIRLVDEPEGRELNHTWRQKDYATNVLSFPADVPDELLDIPLLGDLVICVEVVEREAKEQGKELEAHWAHLVIHGCLHLLGYDHIDDDEAEEMETLEQTLLAELGHPDPYADDDAQKHSTVTIKDSE</sequence>
<feature type="chain" id="PRO_1000201742" description="Endoribonuclease YbeY">
    <location>
        <begin position="1"/>
        <end position="164"/>
    </location>
</feature>
<feature type="region of interest" description="Disordered" evidence="2">
    <location>
        <begin position="140"/>
        <end position="164"/>
    </location>
</feature>
<feature type="compositionally biased region" description="Polar residues" evidence="2">
    <location>
        <begin position="155"/>
        <end position="164"/>
    </location>
</feature>
<feature type="binding site" evidence="1">
    <location>
        <position position="111"/>
    </location>
    <ligand>
        <name>Zn(2+)</name>
        <dbReference type="ChEBI" id="CHEBI:29105"/>
        <note>catalytic</note>
    </ligand>
</feature>
<feature type="binding site" evidence="1">
    <location>
        <position position="115"/>
    </location>
    <ligand>
        <name>Zn(2+)</name>
        <dbReference type="ChEBI" id="CHEBI:29105"/>
        <note>catalytic</note>
    </ligand>
</feature>
<feature type="binding site" evidence="1">
    <location>
        <position position="121"/>
    </location>
    <ligand>
        <name>Zn(2+)</name>
        <dbReference type="ChEBI" id="CHEBI:29105"/>
        <note>catalytic</note>
    </ligand>
</feature>
<organism>
    <name type="scientific">Pseudomonas fluorescens (strain SBW25)</name>
    <dbReference type="NCBI Taxonomy" id="216595"/>
    <lineage>
        <taxon>Bacteria</taxon>
        <taxon>Pseudomonadati</taxon>
        <taxon>Pseudomonadota</taxon>
        <taxon>Gammaproteobacteria</taxon>
        <taxon>Pseudomonadales</taxon>
        <taxon>Pseudomonadaceae</taxon>
        <taxon>Pseudomonas</taxon>
    </lineage>
</organism>
<keyword id="KW-0963">Cytoplasm</keyword>
<keyword id="KW-0255">Endonuclease</keyword>
<keyword id="KW-0378">Hydrolase</keyword>
<keyword id="KW-0479">Metal-binding</keyword>
<keyword id="KW-0540">Nuclease</keyword>
<keyword id="KW-0690">Ribosome biogenesis</keyword>
<keyword id="KW-0698">rRNA processing</keyword>
<keyword id="KW-0862">Zinc</keyword>
<accession>C3K2K8</accession>
<reference key="1">
    <citation type="journal article" date="2009" name="Genome Biol.">
        <title>Genomic and genetic analyses of diversity and plant interactions of Pseudomonas fluorescens.</title>
        <authorList>
            <person name="Silby M.W."/>
            <person name="Cerdeno-Tarraga A.M."/>
            <person name="Vernikos G.S."/>
            <person name="Giddens S.R."/>
            <person name="Jackson R.W."/>
            <person name="Preston G.M."/>
            <person name="Zhang X.-X."/>
            <person name="Moon C.D."/>
            <person name="Gehrig S.M."/>
            <person name="Godfrey S.A.C."/>
            <person name="Knight C.G."/>
            <person name="Malone J.G."/>
            <person name="Robinson Z."/>
            <person name="Spiers A.J."/>
            <person name="Harris S."/>
            <person name="Challis G.L."/>
            <person name="Yaxley A.M."/>
            <person name="Harris D."/>
            <person name="Seeger K."/>
            <person name="Murphy L."/>
            <person name="Rutter S."/>
            <person name="Squares R."/>
            <person name="Quail M.A."/>
            <person name="Saunders E."/>
            <person name="Mavromatis K."/>
            <person name="Brettin T.S."/>
            <person name="Bentley S.D."/>
            <person name="Hothersall J."/>
            <person name="Stephens E."/>
            <person name="Thomas C.M."/>
            <person name="Parkhill J."/>
            <person name="Levy S.B."/>
            <person name="Rainey P.B."/>
            <person name="Thomson N.R."/>
        </authorList>
    </citation>
    <scope>NUCLEOTIDE SEQUENCE [LARGE SCALE GENOMIC DNA]</scope>
    <source>
        <strain>SBW25</strain>
    </source>
</reference>
<evidence type="ECO:0000255" key="1">
    <source>
        <dbReference type="HAMAP-Rule" id="MF_00009"/>
    </source>
</evidence>
<evidence type="ECO:0000256" key="2">
    <source>
        <dbReference type="SAM" id="MobiDB-lite"/>
    </source>
</evidence>
<protein>
    <recommendedName>
        <fullName evidence="1">Endoribonuclease YbeY</fullName>
        <ecNumber evidence="1">3.1.-.-</ecNumber>
    </recommendedName>
</protein>
<gene>
    <name evidence="1" type="primary">ybeY</name>
    <name type="ordered locus">PFLU_5406</name>
</gene>